<proteinExistence type="inferred from homology"/>
<accession>Q3ZZE6</accession>
<organism>
    <name type="scientific">Dehalococcoides mccartyi (strain CBDB1)</name>
    <dbReference type="NCBI Taxonomy" id="255470"/>
    <lineage>
        <taxon>Bacteria</taxon>
        <taxon>Bacillati</taxon>
        <taxon>Chloroflexota</taxon>
        <taxon>Dehalococcoidia</taxon>
        <taxon>Dehalococcoidales</taxon>
        <taxon>Dehalococcoidaceae</taxon>
        <taxon>Dehalococcoides</taxon>
    </lineage>
</organism>
<evidence type="ECO:0000255" key="1">
    <source>
        <dbReference type="HAMAP-Rule" id="MF_00607"/>
    </source>
</evidence>
<feature type="chain" id="PRO_0000257282" description="Ribosomal RNA small subunit methyltransferase A">
    <location>
        <begin position="1"/>
        <end position="291"/>
    </location>
</feature>
<feature type="binding site" evidence="1">
    <location>
        <position position="37"/>
    </location>
    <ligand>
        <name>S-adenosyl-L-methionine</name>
        <dbReference type="ChEBI" id="CHEBI:59789"/>
    </ligand>
</feature>
<feature type="binding site" evidence="1">
    <location>
        <position position="39"/>
    </location>
    <ligand>
        <name>S-adenosyl-L-methionine</name>
        <dbReference type="ChEBI" id="CHEBI:59789"/>
    </ligand>
</feature>
<feature type="binding site" evidence="1">
    <location>
        <position position="64"/>
    </location>
    <ligand>
        <name>S-adenosyl-L-methionine</name>
        <dbReference type="ChEBI" id="CHEBI:59789"/>
    </ligand>
</feature>
<feature type="binding site" evidence="1">
    <location>
        <position position="85"/>
    </location>
    <ligand>
        <name>S-adenosyl-L-methionine</name>
        <dbReference type="ChEBI" id="CHEBI:59789"/>
    </ligand>
</feature>
<feature type="binding site" evidence="1">
    <location>
        <position position="110"/>
    </location>
    <ligand>
        <name>S-adenosyl-L-methionine</name>
        <dbReference type="ChEBI" id="CHEBI:59789"/>
    </ligand>
</feature>
<feature type="binding site" evidence="1">
    <location>
        <position position="131"/>
    </location>
    <ligand>
        <name>S-adenosyl-L-methionine</name>
        <dbReference type="ChEBI" id="CHEBI:59789"/>
    </ligand>
</feature>
<name>RSMA_DEHMC</name>
<gene>
    <name evidence="1" type="primary">rsmA</name>
    <name evidence="1" type="synonym">ksgA</name>
    <name type="ordered locus">cbdbA355</name>
</gene>
<comment type="function">
    <text evidence="1">Specifically dimethylates two adjacent adenosines (A1518 and A1519) in the loop of a conserved hairpin near the 3'-end of 16S rRNA in the 30S particle. May play a critical role in biogenesis of 30S subunits.</text>
</comment>
<comment type="catalytic activity">
    <reaction evidence="1">
        <text>adenosine(1518)/adenosine(1519) in 16S rRNA + 4 S-adenosyl-L-methionine = N(6)-dimethyladenosine(1518)/N(6)-dimethyladenosine(1519) in 16S rRNA + 4 S-adenosyl-L-homocysteine + 4 H(+)</text>
        <dbReference type="Rhea" id="RHEA:19609"/>
        <dbReference type="Rhea" id="RHEA-COMP:10232"/>
        <dbReference type="Rhea" id="RHEA-COMP:10233"/>
        <dbReference type="ChEBI" id="CHEBI:15378"/>
        <dbReference type="ChEBI" id="CHEBI:57856"/>
        <dbReference type="ChEBI" id="CHEBI:59789"/>
        <dbReference type="ChEBI" id="CHEBI:74411"/>
        <dbReference type="ChEBI" id="CHEBI:74493"/>
        <dbReference type="EC" id="2.1.1.182"/>
    </reaction>
</comment>
<comment type="subcellular location">
    <subcellularLocation>
        <location evidence="1">Cytoplasm</location>
    </subcellularLocation>
</comment>
<comment type="similarity">
    <text evidence="1">Belongs to the class I-like SAM-binding methyltransferase superfamily. rRNA adenine N(6)-methyltransferase family. RsmA subfamily.</text>
</comment>
<keyword id="KW-0963">Cytoplasm</keyword>
<keyword id="KW-0489">Methyltransferase</keyword>
<keyword id="KW-0694">RNA-binding</keyword>
<keyword id="KW-0698">rRNA processing</keyword>
<keyword id="KW-0949">S-adenosyl-L-methionine</keyword>
<keyword id="KW-0808">Transferase</keyword>
<sequence>MEKDVPLLVASAPSLMAQAKEMMEGYTLKARKGLGQHFLISQGVLNKILAAADLKPTDTVIEVGPGLGALTEELLKRAGQVIAVELDDKLIDALTEKFKGYPNFRLIHSDILKTSPEEILGQDVPYKLVANLPYYITSAVLRQFLEAKLKPESMVVMVQKEVAKNIVAKTGDMGLLTLSVRFYGNPSLVSVVPGGAFYPPPEVDSAIVKIVIPQTTIMEGVSEVDFFKLARAGFGTRRKTLLNALAQGLGISKPVILSLLNGAGIDPARRAETLSMEEWKKLCLEYAGNPC</sequence>
<dbReference type="EC" id="2.1.1.182" evidence="1"/>
<dbReference type="EMBL" id="AJ965256">
    <property type="protein sequence ID" value="CAI82569.1"/>
    <property type="molecule type" value="Genomic_DNA"/>
</dbReference>
<dbReference type="RefSeq" id="WP_011308926.1">
    <property type="nucleotide sequence ID" value="NC_007356.1"/>
</dbReference>
<dbReference type="SMR" id="Q3ZZE6"/>
<dbReference type="KEGG" id="deh:cbdbA355"/>
<dbReference type="HOGENOM" id="CLU_041220_0_0_0"/>
<dbReference type="Proteomes" id="UP000000433">
    <property type="component" value="Chromosome"/>
</dbReference>
<dbReference type="GO" id="GO:0005829">
    <property type="term" value="C:cytosol"/>
    <property type="evidence" value="ECO:0007669"/>
    <property type="project" value="TreeGrafter"/>
</dbReference>
<dbReference type="GO" id="GO:0052908">
    <property type="term" value="F:16S rRNA (adenine(1518)-N(6)/adenine(1519)-N(6))-dimethyltransferase activity"/>
    <property type="evidence" value="ECO:0007669"/>
    <property type="project" value="UniProtKB-EC"/>
</dbReference>
<dbReference type="GO" id="GO:0003723">
    <property type="term" value="F:RNA binding"/>
    <property type="evidence" value="ECO:0007669"/>
    <property type="project" value="UniProtKB-KW"/>
</dbReference>
<dbReference type="CDD" id="cd02440">
    <property type="entry name" value="AdoMet_MTases"/>
    <property type="match status" value="1"/>
</dbReference>
<dbReference type="FunFam" id="3.40.50.150:FF:000023">
    <property type="entry name" value="Ribosomal RNA small subunit methyltransferase A"/>
    <property type="match status" value="1"/>
</dbReference>
<dbReference type="Gene3D" id="1.10.8.100">
    <property type="entry name" value="Ribosomal RNA adenine dimethylase-like, domain 2"/>
    <property type="match status" value="1"/>
</dbReference>
<dbReference type="Gene3D" id="3.40.50.150">
    <property type="entry name" value="Vaccinia Virus protein VP39"/>
    <property type="match status" value="1"/>
</dbReference>
<dbReference type="HAMAP" id="MF_00607">
    <property type="entry name" value="16SrRNA_methyltr_A"/>
    <property type="match status" value="1"/>
</dbReference>
<dbReference type="InterPro" id="IPR001737">
    <property type="entry name" value="KsgA/Erm"/>
</dbReference>
<dbReference type="InterPro" id="IPR023165">
    <property type="entry name" value="rRNA_Ade_diMease-like_C"/>
</dbReference>
<dbReference type="InterPro" id="IPR020596">
    <property type="entry name" value="rRNA_Ade_Mease_Trfase_CS"/>
</dbReference>
<dbReference type="InterPro" id="IPR020598">
    <property type="entry name" value="rRNA_Ade_methylase_Trfase_N"/>
</dbReference>
<dbReference type="InterPro" id="IPR011530">
    <property type="entry name" value="rRNA_adenine_dimethylase"/>
</dbReference>
<dbReference type="InterPro" id="IPR029063">
    <property type="entry name" value="SAM-dependent_MTases_sf"/>
</dbReference>
<dbReference type="NCBIfam" id="TIGR00755">
    <property type="entry name" value="ksgA"/>
    <property type="match status" value="1"/>
</dbReference>
<dbReference type="PANTHER" id="PTHR11727">
    <property type="entry name" value="DIMETHYLADENOSINE TRANSFERASE"/>
    <property type="match status" value="1"/>
</dbReference>
<dbReference type="PANTHER" id="PTHR11727:SF7">
    <property type="entry name" value="DIMETHYLADENOSINE TRANSFERASE-RELATED"/>
    <property type="match status" value="1"/>
</dbReference>
<dbReference type="Pfam" id="PF00398">
    <property type="entry name" value="RrnaAD"/>
    <property type="match status" value="1"/>
</dbReference>
<dbReference type="SMART" id="SM00650">
    <property type="entry name" value="rADc"/>
    <property type="match status" value="1"/>
</dbReference>
<dbReference type="SUPFAM" id="SSF53335">
    <property type="entry name" value="S-adenosyl-L-methionine-dependent methyltransferases"/>
    <property type="match status" value="1"/>
</dbReference>
<dbReference type="PROSITE" id="PS01131">
    <property type="entry name" value="RRNA_A_DIMETH"/>
    <property type="match status" value="1"/>
</dbReference>
<dbReference type="PROSITE" id="PS51689">
    <property type="entry name" value="SAM_RNA_A_N6_MT"/>
    <property type="match status" value="1"/>
</dbReference>
<protein>
    <recommendedName>
        <fullName evidence="1">Ribosomal RNA small subunit methyltransferase A</fullName>
        <ecNumber evidence="1">2.1.1.182</ecNumber>
    </recommendedName>
    <alternativeName>
        <fullName evidence="1">16S rRNA (adenine(1518)-N(6)/adenine(1519)-N(6))-dimethyltransferase</fullName>
    </alternativeName>
    <alternativeName>
        <fullName evidence="1">16S rRNA dimethyladenosine transferase</fullName>
    </alternativeName>
    <alternativeName>
        <fullName evidence="1">16S rRNA dimethylase</fullName>
    </alternativeName>
    <alternativeName>
        <fullName evidence="1">S-adenosylmethionine-6-N', N'-adenosyl(rRNA) dimethyltransferase</fullName>
    </alternativeName>
</protein>
<reference key="1">
    <citation type="journal article" date="2005" name="Nat. Biotechnol.">
        <title>Genome sequence of the chlorinated compound-respiring bacterium Dehalococcoides species strain CBDB1.</title>
        <authorList>
            <person name="Kube M."/>
            <person name="Beck A."/>
            <person name="Zinder S.H."/>
            <person name="Kuhl H."/>
            <person name="Reinhardt R."/>
            <person name="Adrian L."/>
        </authorList>
    </citation>
    <scope>NUCLEOTIDE SEQUENCE [LARGE SCALE GENOMIC DNA]</scope>
    <source>
        <strain>CBDB1</strain>
    </source>
</reference>